<dbReference type="EMBL" id="CP000350">
    <property type="protein sequence ID" value="ABJ77360.1"/>
    <property type="molecule type" value="Genomic_DNA"/>
</dbReference>
<dbReference type="RefSeq" id="WP_011672136.1">
    <property type="nucleotide sequence ID" value="NC_008510.1"/>
</dbReference>
<dbReference type="SMR" id="Q04P10"/>
<dbReference type="KEGG" id="lbj:LBJ_2965"/>
<dbReference type="HOGENOM" id="CLU_112356_0_2_12"/>
<dbReference type="Proteomes" id="UP000000656">
    <property type="component" value="Chromosome 1"/>
</dbReference>
<dbReference type="GO" id="GO:0005737">
    <property type="term" value="C:cytoplasm"/>
    <property type="evidence" value="ECO:0007669"/>
    <property type="project" value="UniProtKB-SubCell"/>
</dbReference>
<dbReference type="GO" id="GO:0044780">
    <property type="term" value="P:bacterial-type flagellum assembly"/>
    <property type="evidence" value="ECO:0007669"/>
    <property type="project" value="UniProtKB-UniRule"/>
</dbReference>
<dbReference type="GO" id="GO:0006417">
    <property type="term" value="P:regulation of translation"/>
    <property type="evidence" value="ECO:0007669"/>
    <property type="project" value="UniProtKB-KW"/>
</dbReference>
<dbReference type="Gene3D" id="2.30.290.10">
    <property type="entry name" value="BH3618-like"/>
    <property type="match status" value="1"/>
</dbReference>
<dbReference type="HAMAP" id="MF_01185">
    <property type="entry name" value="FliW"/>
    <property type="match status" value="1"/>
</dbReference>
<dbReference type="InterPro" id="IPR003775">
    <property type="entry name" value="Flagellar_assembly_factor_FliW"/>
</dbReference>
<dbReference type="InterPro" id="IPR024046">
    <property type="entry name" value="Flagellar_assmbl_FliW_dom_sf"/>
</dbReference>
<dbReference type="NCBIfam" id="NF009793">
    <property type="entry name" value="PRK13285.1-1"/>
    <property type="match status" value="1"/>
</dbReference>
<dbReference type="PANTHER" id="PTHR39190">
    <property type="entry name" value="FLAGELLAR ASSEMBLY FACTOR FLIW"/>
    <property type="match status" value="1"/>
</dbReference>
<dbReference type="PANTHER" id="PTHR39190:SF1">
    <property type="entry name" value="FLAGELLAR ASSEMBLY FACTOR FLIW"/>
    <property type="match status" value="1"/>
</dbReference>
<dbReference type="Pfam" id="PF02623">
    <property type="entry name" value="FliW"/>
    <property type="match status" value="1"/>
</dbReference>
<dbReference type="SUPFAM" id="SSF141457">
    <property type="entry name" value="BH3618-like"/>
    <property type="match status" value="1"/>
</dbReference>
<gene>
    <name evidence="1" type="primary">fliW</name>
    <name type="ordered locus">LBJ_2965</name>
</gene>
<feature type="chain" id="PRO_1000065819" description="Flagellar assembly factor FliW">
    <location>
        <begin position="1"/>
        <end position="150"/>
    </location>
</feature>
<keyword id="KW-1005">Bacterial flagellum biogenesis</keyword>
<keyword id="KW-0143">Chaperone</keyword>
<keyword id="KW-0963">Cytoplasm</keyword>
<keyword id="KW-0810">Translation regulation</keyword>
<evidence type="ECO:0000255" key="1">
    <source>
        <dbReference type="HAMAP-Rule" id="MF_01185"/>
    </source>
</evidence>
<sequence length="150" mass="16915">MEIEIQTKPFGKMQISEKQILSFPEGLLGFEDYKKFALIEEEEESVFKWLQSVEEVDLAFVVIPPSLFKKEYKPLISEQELQGIGITDLEDGLMLVIVTVPGEDPALMTANMQGPILINKKTLLGKQFISRNESHSVREKILASAAVEMD</sequence>
<proteinExistence type="inferred from homology"/>
<protein>
    <recommendedName>
        <fullName evidence="1">Flagellar assembly factor FliW</fullName>
    </recommendedName>
</protein>
<name>FLIW_LEPBJ</name>
<comment type="function">
    <text evidence="1">Acts as an anti-CsrA protein, binds CsrA and prevents it from repressing translation of its target genes, one of which is flagellin. Binds to flagellin and participates in the assembly of the flagellum.</text>
</comment>
<comment type="subunit">
    <text evidence="1">Interacts with translational regulator CsrA and flagellin(s).</text>
</comment>
<comment type="subcellular location">
    <subcellularLocation>
        <location evidence="1">Cytoplasm</location>
    </subcellularLocation>
</comment>
<comment type="similarity">
    <text evidence="1">Belongs to the FliW family.</text>
</comment>
<accession>Q04P10</accession>
<reference key="1">
    <citation type="journal article" date="2006" name="Proc. Natl. Acad. Sci. U.S.A.">
        <title>Genome reduction in Leptospira borgpetersenii reflects limited transmission potential.</title>
        <authorList>
            <person name="Bulach D.M."/>
            <person name="Zuerner R.L."/>
            <person name="Wilson P."/>
            <person name="Seemann T."/>
            <person name="McGrath A."/>
            <person name="Cullen P.A."/>
            <person name="Davis J."/>
            <person name="Johnson M."/>
            <person name="Kuczek E."/>
            <person name="Alt D.P."/>
            <person name="Peterson-Burch B."/>
            <person name="Coppel R.L."/>
            <person name="Rood J.I."/>
            <person name="Davies J.K."/>
            <person name="Adler B."/>
        </authorList>
    </citation>
    <scope>NUCLEOTIDE SEQUENCE [LARGE SCALE GENOMIC DNA]</scope>
    <source>
        <strain>JB197</strain>
    </source>
</reference>
<organism>
    <name type="scientific">Leptospira borgpetersenii serovar Hardjo-bovis (strain JB197)</name>
    <dbReference type="NCBI Taxonomy" id="355277"/>
    <lineage>
        <taxon>Bacteria</taxon>
        <taxon>Pseudomonadati</taxon>
        <taxon>Spirochaetota</taxon>
        <taxon>Spirochaetia</taxon>
        <taxon>Leptospirales</taxon>
        <taxon>Leptospiraceae</taxon>
        <taxon>Leptospira</taxon>
    </lineage>
</organism>